<dbReference type="EC" id="2.5.1.-" evidence="1"/>
<dbReference type="EMBL" id="CP000153">
    <property type="protein sequence ID" value="ABB44126.1"/>
    <property type="molecule type" value="Genomic_DNA"/>
</dbReference>
<dbReference type="RefSeq" id="WP_011372478.1">
    <property type="nucleotide sequence ID" value="NC_007575.1"/>
</dbReference>
<dbReference type="SMR" id="Q30SA5"/>
<dbReference type="STRING" id="326298.Suden_0848"/>
<dbReference type="KEGG" id="tdn:Suden_0848"/>
<dbReference type="eggNOG" id="COG0500">
    <property type="taxonomic scope" value="Bacteria"/>
</dbReference>
<dbReference type="HOGENOM" id="CLU_052665_1_0_7"/>
<dbReference type="OrthoDB" id="9765084at2"/>
<dbReference type="Proteomes" id="UP000002714">
    <property type="component" value="Chromosome"/>
</dbReference>
<dbReference type="GO" id="GO:0016765">
    <property type="term" value="F:transferase activity, transferring alkyl or aryl (other than methyl) groups"/>
    <property type="evidence" value="ECO:0007669"/>
    <property type="project" value="InterPro"/>
</dbReference>
<dbReference type="GO" id="GO:0002098">
    <property type="term" value="P:tRNA wobble uridine modification"/>
    <property type="evidence" value="ECO:0007669"/>
    <property type="project" value="InterPro"/>
</dbReference>
<dbReference type="CDD" id="cd02440">
    <property type="entry name" value="AdoMet_MTases"/>
    <property type="match status" value="1"/>
</dbReference>
<dbReference type="Gene3D" id="3.40.50.150">
    <property type="entry name" value="Vaccinia Virus protein VP39"/>
    <property type="match status" value="1"/>
</dbReference>
<dbReference type="HAMAP" id="MF_01590">
    <property type="entry name" value="tRNA_carboxymethyltr_CmoB"/>
    <property type="match status" value="1"/>
</dbReference>
<dbReference type="InterPro" id="IPR010017">
    <property type="entry name" value="CmoB"/>
</dbReference>
<dbReference type="InterPro" id="IPR027555">
    <property type="entry name" value="Mo5U34_MeTrfas-like"/>
</dbReference>
<dbReference type="InterPro" id="IPR029063">
    <property type="entry name" value="SAM-dependent_MTases_sf"/>
</dbReference>
<dbReference type="NCBIfam" id="NF011650">
    <property type="entry name" value="PRK15068.1"/>
    <property type="match status" value="1"/>
</dbReference>
<dbReference type="NCBIfam" id="TIGR00452">
    <property type="entry name" value="tRNA 5-methoxyuridine(34)/uridine 5-oxyacetic acid(34) synthase CmoB"/>
    <property type="match status" value="1"/>
</dbReference>
<dbReference type="PANTHER" id="PTHR43861">
    <property type="entry name" value="TRANS-ACONITATE 2-METHYLTRANSFERASE-RELATED"/>
    <property type="match status" value="1"/>
</dbReference>
<dbReference type="Pfam" id="PF08003">
    <property type="entry name" value="Methyltransf_9"/>
    <property type="match status" value="1"/>
</dbReference>
<dbReference type="SUPFAM" id="SSF53335">
    <property type="entry name" value="S-adenosyl-L-methionine-dependent methyltransferases"/>
    <property type="match status" value="1"/>
</dbReference>
<gene>
    <name evidence="1" type="primary">cmoB</name>
    <name type="ordered locus">Suden_0848</name>
</gene>
<reference key="1">
    <citation type="journal article" date="2008" name="Appl. Environ. Microbiol.">
        <title>Genome of the epsilonproteobacterial chemolithoautotroph Sulfurimonas denitrificans.</title>
        <authorList>
            <person name="Sievert S.M."/>
            <person name="Scott K.M."/>
            <person name="Klotz M.G."/>
            <person name="Chain P.S.G."/>
            <person name="Hauser L.J."/>
            <person name="Hemp J."/>
            <person name="Huegler M."/>
            <person name="Land M."/>
            <person name="Lapidus A."/>
            <person name="Larimer F.W."/>
            <person name="Lucas S."/>
            <person name="Malfatti S.A."/>
            <person name="Meyer F."/>
            <person name="Paulsen I.T."/>
            <person name="Ren Q."/>
            <person name="Simon J."/>
            <person name="Bailey K."/>
            <person name="Diaz E."/>
            <person name="Fitzpatrick K.A."/>
            <person name="Glover B."/>
            <person name="Gwatney N."/>
            <person name="Korajkic A."/>
            <person name="Long A."/>
            <person name="Mobberley J.M."/>
            <person name="Pantry S.N."/>
            <person name="Pazder G."/>
            <person name="Peterson S."/>
            <person name="Quintanilla J.D."/>
            <person name="Sprinkle R."/>
            <person name="Stephens J."/>
            <person name="Thomas P."/>
            <person name="Vaughn R."/>
            <person name="Weber M.J."/>
            <person name="Wooten L.L."/>
        </authorList>
    </citation>
    <scope>NUCLEOTIDE SEQUENCE [LARGE SCALE GENOMIC DNA]</scope>
    <source>
        <strain>ATCC 33889 / DSM 1251</strain>
    </source>
</reference>
<feature type="chain" id="PRO_0000313983" description="tRNA U34 carboxymethyltransferase">
    <location>
        <begin position="1"/>
        <end position="296"/>
    </location>
</feature>
<feature type="binding site" evidence="1">
    <location>
        <position position="64"/>
    </location>
    <ligand>
        <name>carboxy-S-adenosyl-L-methionine</name>
        <dbReference type="ChEBI" id="CHEBI:134278"/>
    </ligand>
</feature>
<feature type="binding site" evidence="1">
    <location>
        <position position="78"/>
    </location>
    <ligand>
        <name>carboxy-S-adenosyl-L-methionine</name>
        <dbReference type="ChEBI" id="CHEBI:134278"/>
    </ligand>
</feature>
<feature type="binding site" evidence="1">
    <location>
        <position position="83"/>
    </location>
    <ligand>
        <name>carboxy-S-adenosyl-L-methionine</name>
        <dbReference type="ChEBI" id="CHEBI:134278"/>
    </ligand>
</feature>
<feature type="binding site" evidence="1">
    <location>
        <position position="102"/>
    </location>
    <ligand>
        <name>carboxy-S-adenosyl-L-methionine</name>
        <dbReference type="ChEBI" id="CHEBI:134278"/>
    </ligand>
</feature>
<feature type="binding site" evidence="1">
    <location>
        <begin position="124"/>
        <end position="126"/>
    </location>
    <ligand>
        <name>carboxy-S-adenosyl-L-methionine</name>
        <dbReference type="ChEBI" id="CHEBI:134278"/>
    </ligand>
</feature>
<feature type="binding site" evidence="1">
    <location>
        <begin position="151"/>
        <end position="152"/>
    </location>
    <ligand>
        <name>carboxy-S-adenosyl-L-methionine</name>
        <dbReference type="ChEBI" id="CHEBI:134278"/>
    </ligand>
</feature>
<feature type="binding site" evidence="1">
    <location>
        <position position="171"/>
    </location>
    <ligand>
        <name>carboxy-S-adenosyl-L-methionine</name>
        <dbReference type="ChEBI" id="CHEBI:134278"/>
    </ligand>
</feature>
<feature type="binding site" evidence="1">
    <location>
        <position position="286"/>
    </location>
    <ligand>
        <name>carboxy-S-adenosyl-L-methionine</name>
        <dbReference type="ChEBI" id="CHEBI:134278"/>
    </ligand>
</feature>
<evidence type="ECO:0000255" key="1">
    <source>
        <dbReference type="HAMAP-Rule" id="MF_01590"/>
    </source>
</evidence>
<protein>
    <recommendedName>
        <fullName evidence="1">tRNA U34 carboxymethyltransferase</fullName>
        <ecNumber evidence="1">2.5.1.-</ecNumber>
    </recommendedName>
</protein>
<keyword id="KW-1185">Reference proteome</keyword>
<keyword id="KW-0808">Transferase</keyword>
<keyword id="KW-0819">tRNA processing</keyword>
<comment type="function">
    <text evidence="1">Catalyzes carboxymethyl transfer from carboxy-S-adenosyl-L-methionine (Cx-SAM) to 5-hydroxyuridine (ho5U) to form 5-carboxymethoxyuridine (cmo5U) at position 34 in tRNAs.</text>
</comment>
<comment type="catalytic activity">
    <reaction evidence="1">
        <text>carboxy-S-adenosyl-L-methionine + 5-hydroxyuridine(34) in tRNA = 5-carboxymethoxyuridine(34) in tRNA + S-adenosyl-L-homocysteine + H(+)</text>
        <dbReference type="Rhea" id="RHEA:52848"/>
        <dbReference type="Rhea" id="RHEA-COMP:13381"/>
        <dbReference type="Rhea" id="RHEA-COMP:13383"/>
        <dbReference type="ChEBI" id="CHEBI:15378"/>
        <dbReference type="ChEBI" id="CHEBI:57856"/>
        <dbReference type="ChEBI" id="CHEBI:134278"/>
        <dbReference type="ChEBI" id="CHEBI:136877"/>
        <dbReference type="ChEBI" id="CHEBI:136879"/>
    </reaction>
</comment>
<comment type="subunit">
    <text evidence="1">Homotetramer.</text>
</comment>
<comment type="similarity">
    <text evidence="1">Belongs to the class I-like SAM-binding methyltransferase superfamily. CmoB family.</text>
</comment>
<name>CMOB_SULDN</name>
<sequence>MNINEIRKERQKWMQWKNIAPLREVIEHLGDVTCSVELGDVVTIKGKPLKNIEDTARLMMPWRKGPFEVFGTYIDSEWRSNIKYNLLRKHFNLKDRRVADIGCNNGYYLFRMQEDAPKLLVGFDPSPLFKTQFDFINRFVKSDIVYELLGVEHLEFYEDKFDTIFCLGVLYHRSDPVSMLKSLYKGLDKEGEVILDTFYIEGDEEICLSPASSYSKIPNIYFVPTISALKNWCLRAGFSSFEVLETSLTSSDEQRKTSWIEGESLEDFLDKNDNTKTVEGYPAPSRVYVRLKKGIK</sequence>
<accession>Q30SA5</accession>
<organism>
    <name type="scientific">Sulfurimonas denitrificans (strain ATCC 33889 / DSM 1251)</name>
    <name type="common">Thiomicrospira denitrificans (strain ATCC 33889 / DSM 1251)</name>
    <dbReference type="NCBI Taxonomy" id="326298"/>
    <lineage>
        <taxon>Bacteria</taxon>
        <taxon>Pseudomonadati</taxon>
        <taxon>Campylobacterota</taxon>
        <taxon>Epsilonproteobacteria</taxon>
        <taxon>Campylobacterales</taxon>
        <taxon>Sulfurimonadaceae</taxon>
        <taxon>Sulfurimonas</taxon>
    </lineage>
</organism>
<proteinExistence type="inferred from homology"/>